<keyword id="KW-0488">Methylation</keyword>
<keyword id="KW-0687">Ribonucleoprotein</keyword>
<keyword id="KW-0689">Ribosomal protein</keyword>
<keyword id="KW-0694">RNA-binding</keyword>
<keyword id="KW-0699">rRNA-binding</keyword>
<keyword id="KW-0820">tRNA-binding</keyword>
<reference key="1">
    <citation type="journal article" date="2007" name="PLoS ONE">
        <title>A glimpse of streptococcal toxic shock syndrome from comparative genomics of S. suis 2 Chinese isolates.</title>
        <authorList>
            <person name="Chen C."/>
            <person name="Tang J."/>
            <person name="Dong W."/>
            <person name="Wang C."/>
            <person name="Feng Y."/>
            <person name="Wang J."/>
            <person name="Zheng F."/>
            <person name="Pan X."/>
            <person name="Liu D."/>
            <person name="Li M."/>
            <person name="Song Y."/>
            <person name="Zhu X."/>
            <person name="Sun H."/>
            <person name="Feng T."/>
            <person name="Guo Z."/>
            <person name="Ju A."/>
            <person name="Ge J."/>
            <person name="Dong Y."/>
            <person name="Sun W."/>
            <person name="Jiang Y."/>
            <person name="Wang J."/>
            <person name="Yan J."/>
            <person name="Yang H."/>
            <person name="Wang X."/>
            <person name="Gao G.F."/>
            <person name="Yang R."/>
            <person name="Wang J."/>
            <person name="Yu J."/>
        </authorList>
    </citation>
    <scope>NUCLEOTIDE SEQUENCE [LARGE SCALE GENOMIC DNA]</scope>
    <source>
        <strain>98HAH33</strain>
    </source>
</reference>
<name>RS12_STRS2</name>
<evidence type="ECO:0000250" key="1"/>
<evidence type="ECO:0000255" key="2">
    <source>
        <dbReference type="HAMAP-Rule" id="MF_00403"/>
    </source>
</evidence>
<evidence type="ECO:0000256" key="3">
    <source>
        <dbReference type="SAM" id="MobiDB-lite"/>
    </source>
</evidence>
<evidence type="ECO:0000305" key="4"/>
<comment type="function">
    <text evidence="2">With S4 and S5 plays an important role in translational accuracy.</text>
</comment>
<comment type="function">
    <text evidence="2">Interacts with and stabilizes bases of the 16S rRNA that are involved in tRNA selection in the A site and with the mRNA backbone. Located at the interface of the 30S and 50S subunits, it traverses the body of the 30S subunit contacting proteins on the other side and probably holding the rRNA structure together. The combined cluster of proteins S8, S12 and S17 appears to hold together the shoulder and platform of the 30S subunit.</text>
</comment>
<comment type="subunit">
    <text evidence="2">Part of the 30S ribosomal subunit. Contacts proteins S8 and S17. May interact with IF1 in the 30S initiation complex.</text>
</comment>
<comment type="similarity">
    <text evidence="2">Belongs to the universal ribosomal protein uS12 family.</text>
</comment>
<gene>
    <name evidence="2" type="primary">rpsL</name>
    <name type="ordered locus">SSU98_0153</name>
</gene>
<accession>A4VYX4</accession>
<dbReference type="EMBL" id="CP000408">
    <property type="protein sequence ID" value="ABP91313.1"/>
    <property type="molecule type" value="Genomic_DNA"/>
</dbReference>
<dbReference type="SMR" id="A4VYX4"/>
<dbReference type="KEGG" id="ssv:SSU98_0153"/>
<dbReference type="HOGENOM" id="CLU_104295_1_2_9"/>
<dbReference type="GO" id="GO:0015935">
    <property type="term" value="C:small ribosomal subunit"/>
    <property type="evidence" value="ECO:0007669"/>
    <property type="project" value="InterPro"/>
</dbReference>
<dbReference type="GO" id="GO:0019843">
    <property type="term" value="F:rRNA binding"/>
    <property type="evidence" value="ECO:0007669"/>
    <property type="project" value="UniProtKB-UniRule"/>
</dbReference>
<dbReference type="GO" id="GO:0003735">
    <property type="term" value="F:structural constituent of ribosome"/>
    <property type="evidence" value="ECO:0007669"/>
    <property type="project" value="InterPro"/>
</dbReference>
<dbReference type="GO" id="GO:0000049">
    <property type="term" value="F:tRNA binding"/>
    <property type="evidence" value="ECO:0007669"/>
    <property type="project" value="UniProtKB-UniRule"/>
</dbReference>
<dbReference type="GO" id="GO:0006412">
    <property type="term" value="P:translation"/>
    <property type="evidence" value="ECO:0007669"/>
    <property type="project" value="UniProtKB-UniRule"/>
</dbReference>
<dbReference type="CDD" id="cd03368">
    <property type="entry name" value="Ribosomal_S12"/>
    <property type="match status" value="1"/>
</dbReference>
<dbReference type="FunFam" id="2.40.50.140:FF:000001">
    <property type="entry name" value="30S ribosomal protein S12"/>
    <property type="match status" value="1"/>
</dbReference>
<dbReference type="Gene3D" id="2.40.50.140">
    <property type="entry name" value="Nucleic acid-binding proteins"/>
    <property type="match status" value="1"/>
</dbReference>
<dbReference type="HAMAP" id="MF_00403_B">
    <property type="entry name" value="Ribosomal_uS12_B"/>
    <property type="match status" value="1"/>
</dbReference>
<dbReference type="InterPro" id="IPR012340">
    <property type="entry name" value="NA-bd_OB-fold"/>
</dbReference>
<dbReference type="InterPro" id="IPR006032">
    <property type="entry name" value="Ribosomal_uS12"/>
</dbReference>
<dbReference type="InterPro" id="IPR005679">
    <property type="entry name" value="Ribosomal_uS12_bac"/>
</dbReference>
<dbReference type="NCBIfam" id="TIGR00981">
    <property type="entry name" value="rpsL_bact"/>
    <property type="match status" value="1"/>
</dbReference>
<dbReference type="PANTHER" id="PTHR11652">
    <property type="entry name" value="30S RIBOSOMAL PROTEIN S12 FAMILY MEMBER"/>
    <property type="match status" value="1"/>
</dbReference>
<dbReference type="Pfam" id="PF00164">
    <property type="entry name" value="Ribosom_S12_S23"/>
    <property type="match status" value="1"/>
</dbReference>
<dbReference type="PIRSF" id="PIRSF002133">
    <property type="entry name" value="Ribosomal_S12/S23"/>
    <property type="match status" value="1"/>
</dbReference>
<dbReference type="PRINTS" id="PR01034">
    <property type="entry name" value="RIBOSOMALS12"/>
</dbReference>
<dbReference type="SUPFAM" id="SSF50249">
    <property type="entry name" value="Nucleic acid-binding proteins"/>
    <property type="match status" value="1"/>
</dbReference>
<dbReference type="PROSITE" id="PS00055">
    <property type="entry name" value="RIBOSOMAL_S12"/>
    <property type="match status" value="1"/>
</dbReference>
<protein>
    <recommendedName>
        <fullName evidence="2">Small ribosomal subunit protein uS12</fullName>
    </recommendedName>
    <alternativeName>
        <fullName evidence="4">30S ribosomal protein S12</fullName>
    </alternativeName>
</protein>
<proteinExistence type="inferred from homology"/>
<organism>
    <name type="scientific">Streptococcus suis (strain 98HAH33)</name>
    <dbReference type="NCBI Taxonomy" id="391296"/>
    <lineage>
        <taxon>Bacteria</taxon>
        <taxon>Bacillati</taxon>
        <taxon>Bacillota</taxon>
        <taxon>Bacilli</taxon>
        <taxon>Lactobacillales</taxon>
        <taxon>Streptococcaceae</taxon>
        <taxon>Streptococcus</taxon>
    </lineage>
</organism>
<feature type="chain" id="PRO_0000296037" description="Small ribosomal subunit protein uS12">
    <location>
        <begin position="1"/>
        <end position="137"/>
    </location>
</feature>
<feature type="region of interest" description="Disordered" evidence="3">
    <location>
        <begin position="1"/>
        <end position="57"/>
    </location>
</feature>
<feature type="modified residue" description="3-methylthioaspartic acid" evidence="1">
    <location>
        <position position="102"/>
    </location>
</feature>
<sequence>MPTINQLVRKPRKSKVEKSKSPALNVGYNSRKKVQTNVSSPQKRGVATRVGTMTPKKPNSALRKFARVRLSNLIEVTAYIPGIGHNLQEHSVVLLRGGRVKDLPGVRYHIVRGALDTAGVNDRKQGRSKYGTKRPKG</sequence>